<protein>
    <recommendedName>
        <fullName>Asparagine--tRNA ligase 2</fullName>
        <ecNumber>6.1.1.22</ecNumber>
    </recommendedName>
    <alternativeName>
        <fullName>Asparaginyl-tRNA synthetase 2</fullName>
        <shortName>AsnRS 2</shortName>
    </alternativeName>
</protein>
<comment type="catalytic activity">
    <reaction>
        <text>tRNA(Asn) + L-asparagine + ATP = L-asparaginyl-tRNA(Asn) + AMP + diphosphate + H(+)</text>
        <dbReference type="Rhea" id="RHEA:11180"/>
        <dbReference type="Rhea" id="RHEA-COMP:9659"/>
        <dbReference type="Rhea" id="RHEA-COMP:9674"/>
        <dbReference type="ChEBI" id="CHEBI:15378"/>
        <dbReference type="ChEBI" id="CHEBI:30616"/>
        <dbReference type="ChEBI" id="CHEBI:33019"/>
        <dbReference type="ChEBI" id="CHEBI:58048"/>
        <dbReference type="ChEBI" id="CHEBI:78442"/>
        <dbReference type="ChEBI" id="CHEBI:78515"/>
        <dbReference type="ChEBI" id="CHEBI:456215"/>
        <dbReference type="EC" id="6.1.1.22"/>
    </reaction>
</comment>
<comment type="subunit">
    <text evidence="1">Homodimer.</text>
</comment>
<comment type="subcellular location">
    <subcellularLocation>
        <location evidence="1">Cytoplasm</location>
    </subcellularLocation>
</comment>
<comment type="similarity">
    <text evidence="2">Belongs to the class-II aminoacyl-tRNA synthetase family.</text>
</comment>
<evidence type="ECO:0000250" key="1"/>
<evidence type="ECO:0000305" key="2"/>
<sequence>MVQQINIIDAKDHVDEKVKIGAWLTNKRSSGKIAFLQLRDGSAFFQGVVVKSQVSEEVFELAKEVKQEASMWITGVIHEDSRSKFGYEIEVEDIVVVGESEEYPITPKEHGVDFLLDHRHLWLRSKRPWAIMNIRNEVIRGTYEFFNQEGFIKMDSPILTGSAPEGTTELFHTEYFDRDAYLSQSGQLYAEAGALAYGKVFTFGPTFRAEKSKTRRHLIEFWMIEPEMAFMHQEQSLEVQERYIAFLVQGVIDHCQYALDILGRDVETLKKYTKLPYPRISYDEAIELLKENDFDVDWGVDFGSPEETFLADHFDQPVFVLNYPKAIKPFYMKPHPTRDDVVICADLLAPEGYGEIIGGSERATDYNYLLDQIKQAGLNPDDYAWYLDLRKYGSVPHAGFGLGLERFLTWITAEDHVRETIPFPRLLNRIYP</sequence>
<feature type="chain" id="PRO_0000176419" description="Asparagine--tRNA ligase 2">
    <location>
        <begin position="1"/>
        <end position="432"/>
    </location>
</feature>
<gene>
    <name type="primary">asnS2</name>
    <name type="ordered locus">lp_1740</name>
</gene>
<reference key="1">
    <citation type="journal article" date="2003" name="Proc. Natl. Acad. Sci. U.S.A.">
        <title>Complete genome sequence of Lactobacillus plantarum WCFS1.</title>
        <authorList>
            <person name="Kleerebezem M."/>
            <person name="Boekhorst J."/>
            <person name="van Kranenburg R."/>
            <person name="Molenaar D."/>
            <person name="Kuipers O.P."/>
            <person name="Leer R."/>
            <person name="Tarchini R."/>
            <person name="Peters S.A."/>
            <person name="Sandbrink H.M."/>
            <person name="Fiers M.W.E.J."/>
            <person name="Stiekema W."/>
            <person name="Klein Lankhorst R.M."/>
            <person name="Bron P.A."/>
            <person name="Hoffer S.M."/>
            <person name="Nierop Groot M.N."/>
            <person name="Kerkhoven R."/>
            <person name="De Vries M."/>
            <person name="Ursing B."/>
            <person name="De Vos W.M."/>
            <person name="Siezen R.J."/>
        </authorList>
    </citation>
    <scope>NUCLEOTIDE SEQUENCE [LARGE SCALE GENOMIC DNA]</scope>
    <source>
        <strain>ATCC BAA-793 / NCIMB 8826 / WCFS1</strain>
    </source>
</reference>
<reference key="2">
    <citation type="journal article" date="2012" name="J. Bacteriol.">
        <title>Complete resequencing and reannotation of the Lactobacillus plantarum WCFS1 genome.</title>
        <authorList>
            <person name="Siezen R.J."/>
            <person name="Francke C."/>
            <person name="Renckens B."/>
            <person name="Boekhorst J."/>
            <person name="Wels M."/>
            <person name="Kleerebezem M."/>
            <person name="van Hijum S.A."/>
        </authorList>
    </citation>
    <scope>NUCLEOTIDE SEQUENCE [LARGE SCALE GENOMIC DNA]</scope>
    <scope>GENOME REANNOTATION</scope>
    <source>
        <strain>ATCC BAA-793 / NCIMB 8826 / WCFS1</strain>
    </source>
</reference>
<keyword id="KW-0030">Aminoacyl-tRNA synthetase</keyword>
<keyword id="KW-0067">ATP-binding</keyword>
<keyword id="KW-0963">Cytoplasm</keyword>
<keyword id="KW-0436">Ligase</keyword>
<keyword id="KW-0547">Nucleotide-binding</keyword>
<keyword id="KW-0648">Protein biosynthesis</keyword>
<keyword id="KW-1185">Reference proteome</keyword>
<accession>Q88WA8</accession>
<accession>F9UP95</accession>
<name>SYN2_LACPL</name>
<dbReference type="EC" id="6.1.1.22"/>
<dbReference type="EMBL" id="AL935263">
    <property type="protein sequence ID" value="CCC79034.1"/>
    <property type="molecule type" value="Genomic_DNA"/>
</dbReference>
<dbReference type="RefSeq" id="YP_004889548.1">
    <property type="nucleotide sequence ID" value="NC_004567.2"/>
</dbReference>
<dbReference type="SMR" id="Q88WA8"/>
<dbReference type="STRING" id="220668.lp_1740"/>
<dbReference type="EnsemblBacteria" id="CCC79034">
    <property type="protein sequence ID" value="CCC79034"/>
    <property type="gene ID" value="lp_1740"/>
</dbReference>
<dbReference type="KEGG" id="lpl:lp_1740"/>
<dbReference type="PATRIC" id="fig|220668.9.peg.1468"/>
<dbReference type="eggNOG" id="COG0017">
    <property type="taxonomic scope" value="Bacteria"/>
</dbReference>
<dbReference type="HOGENOM" id="CLU_004553_2_0_9"/>
<dbReference type="OrthoDB" id="9762036at2"/>
<dbReference type="PhylomeDB" id="Q88WA8"/>
<dbReference type="Proteomes" id="UP000000432">
    <property type="component" value="Chromosome"/>
</dbReference>
<dbReference type="GO" id="GO:0005737">
    <property type="term" value="C:cytoplasm"/>
    <property type="evidence" value="ECO:0007669"/>
    <property type="project" value="UniProtKB-SubCell"/>
</dbReference>
<dbReference type="GO" id="GO:0004816">
    <property type="term" value="F:asparagine-tRNA ligase activity"/>
    <property type="evidence" value="ECO:0007669"/>
    <property type="project" value="UniProtKB-UniRule"/>
</dbReference>
<dbReference type="GO" id="GO:0005524">
    <property type="term" value="F:ATP binding"/>
    <property type="evidence" value="ECO:0007669"/>
    <property type="project" value="UniProtKB-UniRule"/>
</dbReference>
<dbReference type="GO" id="GO:0140096">
    <property type="term" value="F:catalytic activity, acting on a protein"/>
    <property type="evidence" value="ECO:0007669"/>
    <property type="project" value="UniProtKB-ARBA"/>
</dbReference>
<dbReference type="GO" id="GO:0003676">
    <property type="term" value="F:nucleic acid binding"/>
    <property type="evidence" value="ECO:0007669"/>
    <property type="project" value="InterPro"/>
</dbReference>
<dbReference type="GO" id="GO:0016740">
    <property type="term" value="F:transferase activity"/>
    <property type="evidence" value="ECO:0007669"/>
    <property type="project" value="UniProtKB-ARBA"/>
</dbReference>
<dbReference type="GO" id="GO:0006421">
    <property type="term" value="P:asparaginyl-tRNA aminoacylation"/>
    <property type="evidence" value="ECO:0007669"/>
    <property type="project" value="UniProtKB-UniRule"/>
</dbReference>
<dbReference type="CDD" id="cd04323">
    <property type="entry name" value="AsnRS_cyto_like_N"/>
    <property type="match status" value="1"/>
</dbReference>
<dbReference type="CDD" id="cd00776">
    <property type="entry name" value="AsxRS_core"/>
    <property type="match status" value="1"/>
</dbReference>
<dbReference type="Gene3D" id="3.30.930.10">
    <property type="entry name" value="Bira Bifunctional Protein, Domain 2"/>
    <property type="match status" value="1"/>
</dbReference>
<dbReference type="Gene3D" id="2.40.50.140">
    <property type="entry name" value="Nucleic acid-binding proteins"/>
    <property type="match status" value="1"/>
</dbReference>
<dbReference type="HAMAP" id="MF_00534">
    <property type="entry name" value="Asn_tRNA_synth"/>
    <property type="match status" value="1"/>
</dbReference>
<dbReference type="InterPro" id="IPR004364">
    <property type="entry name" value="Aa-tRNA-synt_II"/>
</dbReference>
<dbReference type="InterPro" id="IPR006195">
    <property type="entry name" value="aa-tRNA-synth_II"/>
</dbReference>
<dbReference type="InterPro" id="IPR045864">
    <property type="entry name" value="aa-tRNA-synth_II/BPL/LPL"/>
</dbReference>
<dbReference type="InterPro" id="IPR004522">
    <property type="entry name" value="Asn-tRNA-ligase"/>
</dbReference>
<dbReference type="InterPro" id="IPR002312">
    <property type="entry name" value="Asp/Asn-tRNA-synth_IIb"/>
</dbReference>
<dbReference type="InterPro" id="IPR012340">
    <property type="entry name" value="NA-bd_OB-fold"/>
</dbReference>
<dbReference type="InterPro" id="IPR004365">
    <property type="entry name" value="NA-bd_OB_tRNA"/>
</dbReference>
<dbReference type="NCBIfam" id="TIGR00457">
    <property type="entry name" value="asnS"/>
    <property type="match status" value="1"/>
</dbReference>
<dbReference type="NCBIfam" id="NF003037">
    <property type="entry name" value="PRK03932.1"/>
    <property type="match status" value="1"/>
</dbReference>
<dbReference type="PANTHER" id="PTHR22594:SF34">
    <property type="entry name" value="ASPARAGINE--TRNA LIGASE, MITOCHONDRIAL-RELATED"/>
    <property type="match status" value="1"/>
</dbReference>
<dbReference type="PANTHER" id="PTHR22594">
    <property type="entry name" value="ASPARTYL/LYSYL-TRNA SYNTHETASE"/>
    <property type="match status" value="1"/>
</dbReference>
<dbReference type="Pfam" id="PF00152">
    <property type="entry name" value="tRNA-synt_2"/>
    <property type="match status" value="1"/>
</dbReference>
<dbReference type="Pfam" id="PF01336">
    <property type="entry name" value="tRNA_anti-codon"/>
    <property type="match status" value="1"/>
</dbReference>
<dbReference type="PRINTS" id="PR01042">
    <property type="entry name" value="TRNASYNTHASP"/>
</dbReference>
<dbReference type="SUPFAM" id="SSF55681">
    <property type="entry name" value="Class II aaRS and biotin synthetases"/>
    <property type="match status" value="1"/>
</dbReference>
<dbReference type="SUPFAM" id="SSF50249">
    <property type="entry name" value="Nucleic acid-binding proteins"/>
    <property type="match status" value="1"/>
</dbReference>
<dbReference type="PROSITE" id="PS50862">
    <property type="entry name" value="AA_TRNA_LIGASE_II"/>
    <property type="match status" value="1"/>
</dbReference>
<organism>
    <name type="scientific">Lactiplantibacillus plantarum (strain ATCC BAA-793 / NCIMB 8826 / WCFS1)</name>
    <name type="common">Lactobacillus plantarum</name>
    <dbReference type="NCBI Taxonomy" id="220668"/>
    <lineage>
        <taxon>Bacteria</taxon>
        <taxon>Bacillati</taxon>
        <taxon>Bacillota</taxon>
        <taxon>Bacilli</taxon>
        <taxon>Lactobacillales</taxon>
        <taxon>Lactobacillaceae</taxon>
        <taxon>Lactiplantibacillus</taxon>
    </lineage>
</organism>
<proteinExistence type="inferred from homology"/>